<protein>
    <recommendedName>
        <fullName evidence="1">Cytochrome c-552</fullName>
        <ecNumber evidence="1">1.7.2.2</ecNumber>
    </recommendedName>
    <alternativeName>
        <fullName evidence="1">Ammonia-forming cytochrome c nitrite reductase</fullName>
        <shortName evidence="1">Cytochrome c nitrite reductase</shortName>
    </alternativeName>
</protein>
<feature type="signal peptide" evidence="1">
    <location>
        <begin position="1"/>
        <end position="26"/>
    </location>
</feature>
<feature type="chain" id="PRO_1000065801" description="Cytochrome c-552">
    <location>
        <begin position="27"/>
        <end position="478"/>
    </location>
</feature>
<feature type="binding site" description="axial binding residue" evidence="1">
    <location>
        <position position="94"/>
    </location>
    <ligand>
        <name>heme c</name>
        <dbReference type="ChEBI" id="CHEBI:61717"/>
        <label>3</label>
    </ligand>
    <ligandPart>
        <name>Fe</name>
        <dbReference type="ChEBI" id="CHEBI:18248"/>
    </ligandPart>
</feature>
<feature type="binding site" description="covalent" evidence="1">
    <location>
        <position position="122"/>
    </location>
    <ligand>
        <name>heme</name>
        <dbReference type="ChEBI" id="CHEBI:30413"/>
        <label>1</label>
    </ligand>
</feature>
<feature type="binding site" description="covalent" evidence="1">
    <location>
        <position position="125"/>
    </location>
    <ligand>
        <name>heme</name>
        <dbReference type="ChEBI" id="CHEBI:30413"/>
        <label>1</label>
    </ligand>
</feature>
<feature type="binding site" description="axial binding residue" evidence="1">
    <location>
        <position position="126"/>
    </location>
    <ligand>
        <name>heme</name>
        <dbReference type="ChEBI" id="CHEBI:30413"/>
        <label>1</label>
    </ligand>
    <ligandPart>
        <name>Fe</name>
        <dbReference type="ChEBI" id="CHEBI:18248"/>
    </ligandPart>
</feature>
<feature type="binding site" description="covalent" evidence="1">
    <location>
        <position position="160"/>
    </location>
    <ligand>
        <name>heme c</name>
        <dbReference type="ChEBI" id="CHEBI:61717"/>
        <label>2</label>
    </ligand>
</feature>
<feature type="binding site" description="covalent" evidence="1">
    <location>
        <position position="163"/>
    </location>
    <ligand>
        <name>heme c</name>
        <dbReference type="ChEBI" id="CHEBI:61717"/>
        <label>2</label>
    </ligand>
</feature>
<feature type="binding site" description="axial binding residue" evidence="1">
    <location>
        <position position="164"/>
    </location>
    <ligand>
        <name>heme c</name>
        <dbReference type="ChEBI" id="CHEBI:61717"/>
        <label>2</label>
    </ligand>
    <ligandPart>
        <name>Fe</name>
        <dbReference type="ChEBI" id="CHEBI:18248"/>
    </ligandPart>
</feature>
<feature type="binding site" description="covalent" evidence="1">
    <location>
        <position position="209"/>
    </location>
    <ligand>
        <name>heme c</name>
        <dbReference type="ChEBI" id="CHEBI:61717"/>
        <label>3</label>
    </ligand>
</feature>
<feature type="binding site" description="covalent" evidence="1">
    <location>
        <position position="212"/>
    </location>
    <ligand>
        <name>heme c</name>
        <dbReference type="ChEBI" id="CHEBI:61717"/>
        <label>3</label>
    </ligand>
</feature>
<feature type="binding site" description="axial binding residue" evidence="1">
    <location>
        <position position="213"/>
    </location>
    <ligand>
        <name>heme c</name>
        <dbReference type="ChEBI" id="CHEBI:61717"/>
        <label>3</label>
    </ligand>
    <ligandPart>
        <name>Fe</name>
        <dbReference type="ChEBI" id="CHEBI:18248"/>
    </ligandPart>
</feature>
<feature type="binding site" evidence="1">
    <location>
        <position position="215"/>
    </location>
    <ligand>
        <name>Ca(2+)</name>
        <dbReference type="ChEBI" id="CHEBI:29108"/>
    </ligand>
</feature>
<feature type="binding site" evidence="1">
    <location>
        <position position="216"/>
    </location>
    <ligand>
        <name>Ca(2+)</name>
        <dbReference type="ChEBI" id="CHEBI:29108"/>
    </ligand>
</feature>
<feature type="binding site" evidence="1">
    <location>
        <position position="216"/>
    </location>
    <ligand>
        <name>substrate</name>
    </ligand>
</feature>
<feature type="binding site" evidence="1">
    <location>
        <position position="261"/>
    </location>
    <ligand>
        <name>Ca(2+)</name>
        <dbReference type="ChEBI" id="CHEBI:29108"/>
    </ligand>
</feature>
<feature type="binding site" evidence="1">
    <location>
        <position position="263"/>
    </location>
    <ligand>
        <name>Ca(2+)</name>
        <dbReference type="ChEBI" id="CHEBI:29108"/>
    </ligand>
</feature>
<feature type="binding site" evidence="1">
    <location>
        <position position="264"/>
    </location>
    <ligand>
        <name>substrate</name>
    </ligand>
</feature>
<feature type="binding site" description="axial binding residue" evidence="1">
    <location>
        <position position="275"/>
    </location>
    <ligand>
        <name>heme c</name>
        <dbReference type="ChEBI" id="CHEBI:61717"/>
        <label>5</label>
    </ligand>
    <ligandPart>
        <name>Fe</name>
        <dbReference type="ChEBI" id="CHEBI:18248"/>
    </ligandPart>
</feature>
<feature type="binding site" description="covalent" evidence="1">
    <location>
        <position position="282"/>
    </location>
    <ligand>
        <name>heme c</name>
        <dbReference type="ChEBI" id="CHEBI:61717"/>
        <label>4</label>
    </ligand>
</feature>
<feature type="binding site" description="covalent" evidence="1">
    <location>
        <position position="285"/>
    </location>
    <ligand>
        <name>heme c</name>
        <dbReference type="ChEBI" id="CHEBI:61717"/>
        <label>4</label>
    </ligand>
</feature>
<feature type="binding site" description="axial binding residue" evidence="1">
    <location>
        <position position="286"/>
    </location>
    <ligand>
        <name>heme c</name>
        <dbReference type="ChEBI" id="CHEBI:61717"/>
        <label>4</label>
    </ligand>
    <ligandPart>
        <name>Fe</name>
        <dbReference type="ChEBI" id="CHEBI:18248"/>
    </ligandPart>
</feature>
<feature type="binding site" description="axial binding residue" evidence="1">
    <location>
        <position position="301"/>
    </location>
    <ligand>
        <name>heme c</name>
        <dbReference type="ChEBI" id="CHEBI:61717"/>
        <label>2</label>
    </ligand>
    <ligandPart>
        <name>Fe</name>
        <dbReference type="ChEBI" id="CHEBI:18248"/>
    </ligandPart>
</feature>
<feature type="binding site" description="covalent" evidence="1">
    <location>
        <position position="314"/>
    </location>
    <ligand>
        <name>heme c</name>
        <dbReference type="ChEBI" id="CHEBI:61717"/>
        <label>5</label>
    </ligand>
</feature>
<feature type="binding site" description="covalent" evidence="1">
    <location>
        <position position="317"/>
    </location>
    <ligand>
        <name>heme c</name>
        <dbReference type="ChEBI" id="CHEBI:61717"/>
        <label>5</label>
    </ligand>
</feature>
<feature type="binding site" description="axial binding residue" evidence="1">
    <location>
        <position position="318"/>
    </location>
    <ligand>
        <name>heme c</name>
        <dbReference type="ChEBI" id="CHEBI:61717"/>
        <label>5</label>
    </ligand>
    <ligandPart>
        <name>Fe</name>
        <dbReference type="ChEBI" id="CHEBI:18248"/>
    </ligandPart>
</feature>
<feature type="binding site" description="axial binding residue" evidence="1">
    <location>
        <position position="393"/>
    </location>
    <ligand>
        <name>heme c</name>
        <dbReference type="ChEBI" id="CHEBI:61717"/>
        <label>4</label>
    </ligand>
    <ligandPart>
        <name>Fe</name>
        <dbReference type="ChEBI" id="CHEBI:18248"/>
    </ligandPart>
</feature>
<comment type="function">
    <text evidence="1">Catalyzes the reduction of nitrite to ammonia, consuming six electrons in the process.</text>
</comment>
<comment type="catalytic activity">
    <reaction evidence="1">
        <text>6 Fe(III)-[cytochrome c] + NH4(+) + 2 H2O = 6 Fe(II)-[cytochrome c] + nitrite + 8 H(+)</text>
        <dbReference type="Rhea" id="RHEA:13089"/>
        <dbReference type="Rhea" id="RHEA-COMP:10350"/>
        <dbReference type="Rhea" id="RHEA-COMP:14399"/>
        <dbReference type="ChEBI" id="CHEBI:15377"/>
        <dbReference type="ChEBI" id="CHEBI:15378"/>
        <dbReference type="ChEBI" id="CHEBI:16301"/>
        <dbReference type="ChEBI" id="CHEBI:28938"/>
        <dbReference type="ChEBI" id="CHEBI:29033"/>
        <dbReference type="ChEBI" id="CHEBI:29034"/>
        <dbReference type="EC" id="1.7.2.2"/>
    </reaction>
</comment>
<comment type="cofactor">
    <cofactor evidence="1">
        <name>Ca(2+)</name>
        <dbReference type="ChEBI" id="CHEBI:29108"/>
    </cofactor>
    <text evidence="1">Binds 1 Ca(2+) ion per monomer.</text>
</comment>
<comment type="cofactor">
    <cofactor evidence="1">
        <name>heme c</name>
        <dbReference type="ChEBI" id="CHEBI:61717"/>
    </cofactor>
    <text evidence="1">Binds 5 heme c groups covalently per monomer.</text>
</comment>
<comment type="pathway">
    <text evidence="1">Nitrogen metabolism; nitrate reduction (assimilation).</text>
</comment>
<comment type="subcellular location">
    <subcellularLocation>
        <location evidence="1">Periplasm</location>
    </subcellularLocation>
</comment>
<comment type="similarity">
    <text evidence="1">Belongs to the cytochrome c-552 family.</text>
</comment>
<sequence>MTRIKINARRIFSLLIPFFFFTSVHAEQTAAPAKPVTVEAKNETFAPQHPDQYLSWKATSEQSERVDALAEDPRLVILWAGYPFSRDYNKPRGHAFAVTDVRETLRTGAPKNAEDGPLPMACWSCKSPDVARLIQKDGEDGYFHGKWARGGPEIVNNLGCADCHNTASPEFAKGKPELTLSRPYAARAMEAIGKPFEKAGRFDQQSMVCGQCHVEYYFDGKNKAVKFPWDDGMKVENMEQYYDKIAFSDWTNSLSKTPMLKAQHPEYETWTAGIHGKNNVTCIDCHMPKVQNAEGKLYTDHKIGNPFDNFAQTCANCHTQDKAALQKVVAERKQSINDLKIKVEDQLVHAHFEAKAALDAGATEAEMKPIQDDIRHAQWRWDLAIASHGIHMHAPEEGLRMLGTAMDKAADARTKLARLLATKGITHEIQIPDISTKEKAQQAIGLNMEQIKAEKQDFIKTVIPQWEEQARKNGLLSQ</sequence>
<accession>A7ZUU5</accession>
<organism>
    <name type="scientific">Escherichia coli O139:H28 (strain E24377A / ETEC)</name>
    <dbReference type="NCBI Taxonomy" id="331111"/>
    <lineage>
        <taxon>Bacteria</taxon>
        <taxon>Pseudomonadati</taxon>
        <taxon>Pseudomonadota</taxon>
        <taxon>Gammaproteobacteria</taxon>
        <taxon>Enterobacterales</taxon>
        <taxon>Enterobacteriaceae</taxon>
        <taxon>Escherichia</taxon>
    </lineage>
</organism>
<gene>
    <name evidence="1" type="primary">nrfA</name>
    <name type="ordered locus">EcE24377A_4626</name>
</gene>
<dbReference type="EC" id="1.7.2.2" evidence="1"/>
<dbReference type="EMBL" id="CP000800">
    <property type="protein sequence ID" value="ABV19042.1"/>
    <property type="molecule type" value="Genomic_DNA"/>
</dbReference>
<dbReference type="RefSeq" id="WP_000196875.1">
    <property type="nucleotide sequence ID" value="NC_009801.1"/>
</dbReference>
<dbReference type="SMR" id="A7ZUU5"/>
<dbReference type="GeneID" id="93777759"/>
<dbReference type="KEGG" id="ecw:EcE24377A_4626"/>
<dbReference type="HOGENOM" id="CLU_035040_1_0_6"/>
<dbReference type="UniPathway" id="UPA00653"/>
<dbReference type="Proteomes" id="UP000001122">
    <property type="component" value="Chromosome"/>
</dbReference>
<dbReference type="GO" id="GO:0030288">
    <property type="term" value="C:outer membrane-bounded periplasmic space"/>
    <property type="evidence" value="ECO:0007669"/>
    <property type="project" value="TreeGrafter"/>
</dbReference>
<dbReference type="GO" id="GO:0005509">
    <property type="term" value="F:calcium ion binding"/>
    <property type="evidence" value="ECO:0007669"/>
    <property type="project" value="UniProtKB-UniRule"/>
</dbReference>
<dbReference type="GO" id="GO:0020037">
    <property type="term" value="F:heme binding"/>
    <property type="evidence" value="ECO:0007669"/>
    <property type="project" value="InterPro"/>
</dbReference>
<dbReference type="GO" id="GO:0005506">
    <property type="term" value="F:iron ion binding"/>
    <property type="evidence" value="ECO:0007669"/>
    <property type="project" value="UniProtKB-UniRule"/>
</dbReference>
<dbReference type="GO" id="GO:0042279">
    <property type="term" value="F:nitrite reductase (cytochrome, ammonia-forming) activity"/>
    <property type="evidence" value="ECO:0007669"/>
    <property type="project" value="UniProtKB-UniRule"/>
</dbReference>
<dbReference type="GO" id="GO:0019645">
    <property type="term" value="P:anaerobic electron transport chain"/>
    <property type="evidence" value="ECO:0007669"/>
    <property type="project" value="TreeGrafter"/>
</dbReference>
<dbReference type="GO" id="GO:0042128">
    <property type="term" value="P:nitrate assimilation"/>
    <property type="evidence" value="ECO:0007669"/>
    <property type="project" value="UniProtKB-UniRule"/>
</dbReference>
<dbReference type="CDD" id="cd00548">
    <property type="entry name" value="NrfA-like"/>
    <property type="match status" value="1"/>
</dbReference>
<dbReference type="FunFam" id="1.10.1130.10:FF:000002">
    <property type="entry name" value="Cytochrome c-552"/>
    <property type="match status" value="1"/>
</dbReference>
<dbReference type="FunFam" id="1.20.140.10:FF:000014">
    <property type="entry name" value="Cytochrome c-552"/>
    <property type="match status" value="1"/>
</dbReference>
<dbReference type="Gene3D" id="1.20.140.10">
    <property type="entry name" value="Butyryl-CoA Dehydrogenase, subunit A, domain 3"/>
    <property type="match status" value="1"/>
</dbReference>
<dbReference type="Gene3D" id="1.10.1130.10">
    <property type="entry name" value="Flavocytochrome C3, Chain A"/>
    <property type="match status" value="1"/>
</dbReference>
<dbReference type="HAMAP" id="MF_01182">
    <property type="entry name" value="Cytochrom_C552"/>
    <property type="match status" value="1"/>
</dbReference>
<dbReference type="InterPro" id="IPR003321">
    <property type="entry name" value="Cyt_c552"/>
</dbReference>
<dbReference type="InterPro" id="IPR017570">
    <property type="entry name" value="Cyt_c_NO2Rdtase_formate-dep"/>
</dbReference>
<dbReference type="InterPro" id="IPR036280">
    <property type="entry name" value="Multihaem_cyt_sf"/>
</dbReference>
<dbReference type="NCBIfam" id="TIGR03152">
    <property type="entry name" value="cyto_c552_HCOOH"/>
    <property type="match status" value="1"/>
</dbReference>
<dbReference type="NCBIfam" id="NF008339">
    <property type="entry name" value="PRK11125.1"/>
    <property type="match status" value="1"/>
</dbReference>
<dbReference type="PANTHER" id="PTHR30633:SF0">
    <property type="entry name" value="CYTOCHROME C-552"/>
    <property type="match status" value="1"/>
</dbReference>
<dbReference type="PANTHER" id="PTHR30633">
    <property type="entry name" value="CYTOCHROME C-552 RESPIRATORY NITRITE REDUCTASE"/>
    <property type="match status" value="1"/>
</dbReference>
<dbReference type="Pfam" id="PF02335">
    <property type="entry name" value="Cytochrom_C552"/>
    <property type="match status" value="1"/>
</dbReference>
<dbReference type="PIRSF" id="PIRSF000243">
    <property type="entry name" value="Cyt_c552"/>
    <property type="match status" value="1"/>
</dbReference>
<dbReference type="SUPFAM" id="SSF48695">
    <property type="entry name" value="Multiheme cytochromes"/>
    <property type="match status" value="1"/>
</dbReference>
<dbReference type="PROSITE" id="PS51008">
    <property type="entry name" value="MULTIHEME_CYTC"/>
    <property type="match status" value="1"/>
</dbReference>
<proteinExistence type="inferred from homology"/>
<reference key="1">
    <citation type="journal article" date="2008" name="J. Bacteriol.">
        <title>The pangenome structure of Escherichia coli: comparative genomic analysis of E. coli commensal and pathogenic isolates.</title>
        <authorList>
            <person name="Rasko D.A."/>
            <person name="Rosovitz M.J."/>
            <person name="Myers G.S.A."/>
            <person name="Mongodin E.F."/>
            <person name="Fricke W.F."/>
            <person name="Gajer P."/>
            <person name="Crabtree J."/>
            <person name="Sebaihia M."/>
            <person name="Thomson N.R."/>
            <person name="Chaudhuri R."/>
            <person name="Henderson I.R."/>
            <person name="Sperandio V."/>
            <person name="Ravel J."/>
        </authorList>
    </citation>
    <scope>NUCLEOTIDE SEQUENCE [LARGE SCALE GENOMIC DNA]</scope>
    <source>
        <strain>E24377A / ETEC</strain>
    </source>
</reference>
<name>NRFA_ECO24</name>
<keyword id="KW-0106">Calcium</keyword>
<keyword id="KW-0249">Electron transport</keyword>
<keyword id="KW-0349">Heme</keyword>
<keyword id="KW-0408">Iron</keyword>
<keyword id="KW-0479">Metal-binding</keyword>
<keyword id="KW-0560">Oxidoreductase</keyword>
<keyword id="KW-0574">Periplasm</keyword>
<keyword id="KW-1185">Reference proteome</keyword>
<keyword id="KW-0732">Signal</keyword>
<keyword id="KW-0813">Transport</keyword>
<evidence type="ECO:0000255" key="1">
    <source>
        <dbReference type="HAMAP-Rule" id="MF_01182"/>
    </source>
</evidence>